<reference key="1">
    <citation type="submission" date="2006-12" db="EMBL/GenBank/DDBJ databases">
        <title>Complete sequence of Chlorobium phaeobacteroides DSM 266.</title>
        <authorList>
            <consortium name="US DOE Joint Genome Institute"/>
            <person name="Copeland A."/>
            <person name="Lucas S."/>
            <person name="Lapidus A."/>
            <person name="Barry K."/>
            <person name="Detter J.C."/>
            <person name="Glavina del Rio T."/>
            <person name="Hammon N."/>
            <person name="Israni S."/>
            <person name="Pitluck S."/>
            <person name="Goltsman E."/>
            <person name="Schmutz J."/>
            <person name="Larimer F."/>
            <person name="Land M."/>
            <person name="Hauser L."/>
            <person name="Mikhailova N."/>
            <person name="Li T."/>
            <person name="Overmann J."/>
            <person name="Bryant D.A."/>
            <person name="Richardson P."/>
        </authorList>
    </citation>
    <scope>NUCLEOTIDE SEQUENCE [LARGE SCALE GENOMIC DNA]</scope>
    <source>
        <strain>DSM 266 / SMG 266 / 2430</strain>
    </source>
</reference>
<comment type="catalytic activity">
    <reaction evidence="1">
        <text>tRNA(Phe) + L-phenylalanine + ATP = L-phenylalanyl-tRNA(Phe) + AMP + diphosphate + H(+)</text>
        <dbReference type="Rhea" id="RHEA:19413"/>
        <dbReference type="Rhea" id="RHEA-COMP:9668"/>
        <dbReference type="Rhea" id="RHEA-COMP:9699"/>
        <dbReference type="ChEBI" id="CHEBI:15378"/>
        <dbReference type="ChEBI" id="CHEBI:30616"/>
        <dbReference type="ChEBI" id="CHEBI:33019"/>
        <dbReference type="ChEBI" id="CHEBI:58095"/>
        <dbReference type="ChEBI" id="CHEBI:78442"/>
        <dbReference type="ChEBI" id="CHEBI:78531"/>
        <dbReference type="ChEBI" id="CHEBI:456215"/>
        <dbReference type="EC" id="6.1.1.20"/>
    </reaction>
</comment>
<comment type="cofactor">
    <cofactor evidence="1">
        <name>Mg(2+)</name>
        <dbReference type="ChEBI" id="CHEBI:18420"/>
    </cofactor>
    <text evidence="1">Binds 2 magnesium ions per tetramer.</text>
</comment>
<comment type="subunit">
    <text evidence="1">Tetramer of two alpha and two beta subunits.</text>
</comment>
<comment type="subcellular location">
    <subcellularLocation>
        <location evidence="1">Cytoplasm</location>
    </subcellularLocation>
</comment>
<comment type="similarity">
    <text evidence="1">Belongs to the class-II aminoacyl-tRNA synthetase family. Phe-tRNA synthetase alpha subunit type 1 subfamily.</text>
</comment>
<protein>
    <recommendedName>
        <fullName evidence="1">Phenylalanine--tRNA ligase alpha subunit</fullName>
        <ecNumber evidence="1">6.1.1.20</ecNumber>
    </recommendedName>
    <alternativeName>
        <fullName evidence="1">Phenylalanyl-tRNA synthetase alpha subunit</fullName>
        <shortName evidence="1">PheRS</shortName>
    </alternativeName>
</protein>
<feature type="chain" id="PRO_1000006812" description="Phenylalanine--tRNA ligase alpha subunit">
    <location>
        <begin position="1"/>
        <end position="341"/>
    </location>
</feature>
<feature type="binding site" evidence="1">
    <location>
        <position position="254"/>
    </location>
    <ligand>
        <name>Mg(2+)</name>
        <dbReference type="ChEBI" id="CHEBI:18420"/>
        <note>shared with beta subunit</note>
    </ligand>
</feature>
<gene>
    <name evidence="1" type="primary">pheS</name>
    <name type="ordered locus">Cpha266_2505</name>
</gene>
<accession>A1BJB6</accession>
<sequence length="341" mass="38376">MENAIRSLQQEISEYELASIKDIEAFRLRYTVRKGLIAGLFGQLKSVLPADKPRMGQLLNQLRQTADDKLAAATAELASAESKTEPKLDLTLPGRRTFIGSEHPVQKVLGEMKGIFSSMGFSIATGPELELDRYNFDLLNFPPDHPARDMQDTFFITRGNANGDVLLRTHTSPVQIRVMLDQKPPIRVICPGKVYRNEAISSRSYCVFHQLEGLYIDKGVSFADLKATIFSFAHQMFGSDVKLRFRPSFFPFTEPSAEVDVSCYLCGGKGCRVCKKSGWLEIMGCGMVHPNVMRNSGIDPEKWSGYAFGMGVDRTVLLRYKIDDIRLLFENDVRMLRQFPA</sequence>
<name>SYFA_CHLPD</name>
<organism>
    <name type="scientific">Chlorobium phaeobacteroides (strain DSM 266 / SMG 266 / 2430)</name>
    <dbReference type="NCBI Taxonomy" id="290317"/>
    <lineage>
        <taxon>Bacteria</taxon>
        <taxon>Pseudomonadati</taxon>
        <taxon>Chlorobiota</taxon>
        <taxon>Chlorobiia</taxon>
        <taxon>Chlorobiales</taxon>
        <taxon>Chlorobiaceae</taxon>
        <taxon>Chlorobium/Pelodictyon group</taxon>
        <taxon>Chlorobium</taxon>
    </lineage>
</organism>
<dbReference type="EC" id="6.1.1.20" evidence="1"/>
<dbReference type="EMBL" id="CP000492">
    <property type="protein sequence ID" value="ABL66493.1"/>
    <property type="molecule type" value="Genomic_DNA"/>
</dbReference>
<dbReference type="RefSeq" id="WP_011746270.1">
    <property type="nucleotide sequence ID" value="NC_008639.1"/>
</dbReference>
<dbReference type="SMR" id="A1BJB6"/>
<dbReference type="STRING" id="290317.Cpha266_2505"/>
<dbReference type="KEGG" id="cph:Cpha266_2505"/>
<dbReference type="eggNOG" id="COG0016">
    <property type="taxonomic scope" value="Bacteria"/>
</dbReference>
<dbReference type="HOGENOM" id="CLU_025086_0_1_10"/>
<dbReference type="OrthoDB" id="9800719at2"/>
<dbReference type="Proteomes" id="UP000008701">
    <property type="component" value="Chromosome"/>
</dbReference>
<dbReference type="GO" id="GO:0005737">
    <property type="term" value="C:cytoplasm"/>
    <property type="evidence" value="ECO:0007669"/>
    <property type="project" value="UniProtKB-SubCell"/>
</dbReference>
<dbReference type="GO" id="GO:0005524">
    <property type="term" value="F:ATP binding"/>
    <property type="evidence" value="ECO:0007669"/>
    <property type="project" value="UniProtKB-UniRule"/>
</dbReference>
<dbReference type="GO" id="GO:0000287">
    <property type="term" value="F:magnesium ion binding"/>
    <property type="evidence" value="ECO:0007669"/>
    <property type="project" value="UniProtKB-UniRule"/>
</dbReference>
<dbReference type="GO" id="GO:0004826">
    <property type="term" value="F:phenylalanine-tRNA ligase activity"/>
    <property type="evidence" value="ECO:0007669"/>
    <property type="project" value="UniProtKB-UniRule"/>
</dbReference>
<dbReference type="GO" id="GO:0000049">
    <property type="term" value="F:tRNA binding"/>
    <property type="evidence" value="ECO:0007669"/>
    <property type="project" value="InterPro"/>
</dbReference>
<dbReference type="GO" id="GO:0006432">
    <property type="term" value="P:phenylalanyl-tRNA aminoacylation"/>
    <property type="evidence" value="ECO:0007669"/>
    <property type="project" value="UniProtKB-UniRule"/>
</dbReference>
<dbReference type="CDD" id="cd00496">
    <property type="entry name" value="PheRS_alpha_core"/>
    <property type="match status" value="1"/>
</dbReference>
<dbReference type="Gene3D" id="3.30.930.10">
    <property type="entry name" value="Bira Bifunctional Protein, Domain 2"/>
    <property type="match status" value="1"/>
</dbReference>
<dbReference type="HAMAP" id="MF_00281">
    <property type="entry name" value="Phe_tRNA_synth_alpha1"/>
    <property type="match status" value="1"/>
</dbReference>
<dbReference type="InterPro" id="IPR006195">
    <property type="entry name" value="aa-tRNA-synth_II"/>
</dbReference>
<dbReference type="InterPro" id="IPR045864">
    <property type="entry name" value="aa-tRNA-synth_II/BPL/LPL"/>
</dbReference>
<dbReference type="InterPro" id="IPR004529">
    <property type="entry name" value="Phe-tRNA-synth_IIc_asu"/>
</dbReference>
<dbReference type="InterPro" id="IPR004188">
    <property type="entry name" value="Phe-tRNA_ligase_II_N"/>
</dbReference>
<dbReference type="InterPro" id="IPR022911">
    <property type="entry name" value="Phe_tRNA_ligase_alpha1_bac"/>
</dbReference>
<dbReference type="InterPro" id="IPR002319">
    <property type="entry name" value="Phenylalanyl-tRNA_Synthase"/>
</dbReference>
<dbReference type="InterPro" id="IPR010978">
    <property type="entry name" value="tRNA-bd_arm"/>
</dbReference>
<dbReference type="NCBIfam" id="TIGR00468">
    <property type="entry name" value="pheS"/>
    <property type="match status" value="1"/>
</dbReference>
<dbReference type="PANTHER" id="PTHR11538:SF41">
    <property type="entry name" value="PHENYLALANINE--TRNA LIGASE, MITOCHONDRIAL"/>
    <property type="match status" value="1"/>
</dbReference>
<dbReference type="PANTHER" id="PTHR11538">
    <property type="entry name" value="PHENYLALANYL-TRNA SYNTHETASE"/>
    <property type="match status" value="1"/>
</dbReference>
<dbReference type="Pfam" id="PF02912">
    <property type="entry name" value="Phe_tRNA-synt_N"/>
    <property type="match status" value="1"/>
</dbReference>
<dbReference type="Pfam" id="PF01409">
    <property type="entry name" value="tRNA-synt_2d"/>
    <property type="match status" value="1"/>
</dbReference>
<dbReference type="SUPFAM" id="SSF55681">
    <property type="entry name" value="Class II aaRS and biotin synthetases"/>
    <property type="match status" value="1"/>
</dbReference>
<dbReference type="SUPFAM" id="SSF46589">
    <property type="entry name" value="tRNA-binding arm"/>
    <property type="match status" value="1"/>
</dbReference>
<dbReference type="PROSITE" id="PS50862">
    <property type="entry name" value="AA_TRNA_LIGASE_II"/>
    <property type="match status" value="1"/>
</dbReference>
<keyword id="KW-0030">Aminoacyl-tRNA synthetase</keyword>
<keyword id="KW-0067">ATP-binding</keyword>
<keyword id="KW-0963">Cytoplasm</keyword>
<keyword id="KW-0436">Ligase</keyword>
<keyword id="KW-0460">Magnesium</keyword>
<keyword id="KW-0479">Metal-binding</keyword>
<keyword id="KW-0547">Nucleotide-binding</keyword>
<keyword id="KW-0648">Protein biosynthesis</keyword>
<keyword id="KW-1185">Reference proteome</keyword>
<proteinExistence type="inferred from homology"/>
<evidence type="ECO:0000255" key="1">
    <source>
        <dbReference type="HAMAP-Rule" id="MF_00281"/>
    </source>
</evidence>